<feature type="chain" id="PRO_0000063194" description="Uridine phosphorylase 2">
    <location>
        <begin position="1"/>
        <end position="320"/>
    </location>
</feature>
<feature type="binding site" evidence="2">
    <location>
        <position position="66"/>
    </location>
    <ligand>
        <name>phosphate</name>
        <dbReference type="ChEBI" id="CHEBI:43474"/>
    </ligand>
</feature>
<feature type="binding site" evidence="1">
    <location>
        <position position="100"/>
    </location>
    <ligand>
        <name>phosphate</name>
        <dbReference type="ChEBI" id="CHEBI:43474"/>
    </ligand>
</feature>
<feature type="binding site" evidence="1">
    <location>
        <begin position="144"/>
        <end position="147"/>
    </location>
    <ligand>
        <name>phosphate</name>
        <dbReference type="ChEBI" id="CHEBI:43474"/>
    </ligand>
</feature>
<feature type="binding site" evidence="1">
    <location>
        <begin position="148"/>
        <end position="149"/>
    </location>
    <ligand>
        <name>uridine</name>
        <dbReference type="ChEBI" id="CHEBI:16704"/>
    </ligand>
</feature>
<feature type="binding site" evidence="1">
    <location>
        <begin position="223"/>
        <end position="225"/>
    </location>
    <ligand>
        <name>uridine</name>
        <dbReference type="ChEBI" id="CHEBI:16704"/>
    </ligand>
</feature>
<feature type="disulfide bond" description="Redox-active" evidence="1">
    <location>
        <begin position="95"/>
        <end position="102"/>
    </location>
</feature>
<gene>
    <name evidence="7" type="primary">Upp2</name>
</gene>
<evidence type="ECO:0000250" key="1">
    <source>
        <dbReference type="UniProtKB" id="O95045"/>
    </source>
</evidence>
<evidence type="ECO:0000250" key="2">
    <source>
        <dbReference type="UniProtKB" id="Q16831"/>
    </source>
</evidence>
<evidence type="ECO:0000269" key="3">
    <source>
    </source>
</evidence>
<evidence type="ECO:0000303" key="4">
    <source>
    </source>
</evidence>
<evidence type="ECO:0000305" key="5"/>
<evidence type="ECO:0000305" key="6">
    <source>
    </source>
</evidence>
<evidence type="ECO:0000312" key="7">
    <source>
        <dbReference type="MGI" id="MGI:1923904"/>
    </source>
</evidence>
<organism>
    <name type="scientific">Mus musculus</name>
    <name type="common">Mouse</name>
    <dbReference type="NCBI Taxonomy" id="10090"/>
    <lineage>
        <taxon>Eukaryota</taxon>
        <taxon>Metazoa</taxon>
        <taxon>Chordata</taxon>
        <taxon>Craniata</taxon>
        <taxon>Vertebrata</taxon>
        <taxon>Euteleostomi</taxon>
        <taxon>Mammalia</taxon>
        <taxon>Eutheria</taxon>
        <taxon>Euarchontoglires</taxon>
        <taxon>Glires</taxon>
        <taxon>Rodentia</taxon>
        <taxon>Myomorpha</taxon>
        <taxon>Muroidea</taxon>
        <taxon>Muridae</taxon>
        <taxon>Murinae</taxon>
        <taxon>Mus</taxon>
        <taxon>Mus</taxon>
    </lineage>
</organism>
<comment type="function">
    <text evidence="1 3">Catalyzes the reversible phosphorylytic cleavage of uridine to uracil and ribose-1-phosphate which can then be utilized as carbon and energy sources or in the rescue of pyrimidine bases for nucleotide synthesis (PubMed:14715930). Shows broad substrate specificity and can also accept deoxyuridine and other analogous compounds (By similarity).</text>
</comment>
<comment type="catalytic activity">
    <reaction evidence="3">
        <text>uridine + phosphate = alpha-D-ribose 1-phosphate + uracil</text>
        <dbReference type="Rhea" id="RHEA:24388"/>
        <dbReference type="ChEBI" id="CHEBI:16704"/>
        <dbReference type="ChEBI" id="CHEBI:17568"/>
        <dbReference type="ChEBI" id="CHEBI:43474"/>
        <dbReference type="ChEBI" id="CHEBI:57720"/>
        <dbReference type="EC" id="2.4.2.3"/>
    </reaction>
    <physiologicalReaction direction="left-to-right" evidence="6">
        <dbReference type="Rhea" id="RHEA:24389"/>
    </physiologicalReaction>
</comment>
<comment type="catalytic activity">
    <reaction evidence="1">
        <text>2'-deoxyuridine + phosphate = 2-deoxy-alpha-D-ribose 1-phosphate + uracil</text>
        <dbReference type="Rhea" id="RHEA:22824"/>
        <dbReference type="ChEBI" id="CHEBI:16450"/>
        <dbReference type="ChEBI" id="CHEBI:17568"/>
        <dbReference type="ChEBI" id="CHEBI:43474"/>
        <dbReference type="ChEBI" id="CHEBI:57259"/>
    </reaction>
    <physiologicalReaction direction="left-to-right" evidence="1">
        <dbReference type="Rhea" id="RHEA:22825"/>
    </physiologicalReaction>
</comment>
<comment type="activity regulation">
    <text evidence="1">A conditional disulfide bridge can form within the protein that dislocates a critical phosphate-coordinating arginine Arg-100 away from the active site, disabling the enzyme.</text>
</comment>
<comment type="biophysicochemical properties">
    <kinetics>
        <KM evidence="3">241.7 uM for uridine</KM>
    </kinetics>
</comment>
<comment type="pathway">
    <text evidence="3">Pyrimidine metabolism; UMP biosynthesis via salvage pathway; uracil from uridine (phosphorylase route): step 1/1.</text>
</comment>
<comment type="subunit">
    <text evidence="1">Homodimer.</text>
</comment>
<comment type="tissue specificity">
    <text evidence="3">Liver specific.</text>
</comment>
<comment type="induction">
    <text evidence="3">Directly up-regulated in liver by HNF-4-alpha (HNF4A) binding to the promoter. May also be indirectly regulated by signaling via various orphan nuclear receptors. Strongly up-regulated by a liver X receptor (LXR) agonist. Slightly up-regulated by a pregnane X receptor (PXR) agonist. Strongly repressed by a peroxisome proliferator-activated receptor alpha (PPAR-alpha) agonist. Slightly repressed by a farnesoid X receptor (FXR) agonist. Shows a diurnal expression pattern with peak levels 12 hours after light onset and lowest levels 0 hours after light onset.</text>
</comment>
<comment type="similarity">
    <text evidence="5">Belongs to the PNP/UDP phosphorylase family.</text>
</comment>
<keyword id="KW-1015">Disulfide bond</keyword>
<keyword id="KW-0328">Glycosyltransferase</keyword>
<keyword id="KW-0676">Redox-active center</keyword>
<keyword id="KW-1185">Reference proteome</keyword>
<keyword id="KW-0808">Transferase</keyword>
<proteinExistence type="evidence at protein level"/>
<name>UPP2_MOUSE</name>
<reference key="1">
    <citation type="journal article" date="2004" name="Mol. Endocrinol.">
        <title>Identification of a liver-specific uridine phosphorylase that is regulated by multiple lipid-sensing nuclear receptors.</title>
        <authorList>
            <person name="Zhang Y."/>
            <person name="Repa J.J."/>
            <person name="Inoue Y."/>
            <person name="Hayhurst G.P."/>
            <person name="Gonzalez F.J."/>
            <person name="Mangelsdorf D.J."/>
        </authorList>
    </citation>
    <scope>NUCLEOTIDE SEQUENCE [MRNA]</scope>
    <scope>FUNCTION</scope>
    <scope>CATALYTIC ACTIVITY</scope>
    <scope>BIOPHYSICOCHEMICAL PROPERTIES</scope>
    <scope>PATHWAY</scope>
    <scope>TISSUE SPECIFICITY</scope>
    <scope>INDUCTION</scope>
    <source>
        <strain>C57BL/6 X 129</strain>
    </source>
</reference>
<sequence>MASILPASNRSMRPDKNTYERKRSVYVKNPYLEGMDEDILYHLDLGTKTHNLPAMFGDVKFVCVGGSPNRMKAFAQFMHKELRLEGDGEDIEDICAGTDRYCMFKTGPVLSVSHGMGIPSISIMLHELIKLLHHAHCCDVTIIRIGTSGGIGIAPGSVVITDTAVDSFFKPRFEQVILDNVVTRSTELDKELANDLFNCSREIPNVPTLIGHTMCTYDFYEGQGRLDGALCSFSREKKLDYLKRAYRAGVRNIEMESTVFAAMCGLCGLRAAVVCVTLLDRLESDQINLSHDVLVEYQQRPQLLISNFIKKQLGLCDQMS</sequence>
<dbReference type="EC" id="2.4.2.3" evidence="3"/>
<dbReference type="EMBL" id="AY152393">
    <property type="protein sequence ID" value="AAO05705.1"/>
    <property type="molecule type" value="mRNA"/>
</dbReference>
<dbReference type="CCDS" id="CCDS16051.1"/>
<dbReference type="RefSeq" id="NP_083968.1">
    <property type="nucleotide sequence ID" value="NM_029692.3"/>
</dbReference>
<dbReference type="RefSeq" id="XP_006498472.1">
    <property type="nucleotide sequence ID" value="XM_006498409.4"/>
</dbReference>
<dbReference type="RefSeq" id="XP_006498473.1">
    <property type="nucleotide sequence ID" value="XM_006498410.5"/>
</dbReference>
<dbReference type="RefSeq" id="XP_006498474.1">
    <property type="nucleotide sequence ID" value="XM_006498411.3"/>
</dbReference>
<dbReference type="RefSeq" id="XP_030108053.1">
    <property type="nucleotide sequence ID" value="XM_030252193.1"/>
</dbReference>
<dbReference type="RefSeq" id="XP_036018568.1">
    <property type="nucleotide sequence ID" value="XM_036162675.1"/>
</dbReference>
<dbReference type="RefSeq" id="XP_036018569.1">
    <property type="nucleotide sequence ID" value="XM_036162676.1"/>
</dbReference>
<dbReference type="SMR" id="Q8CGR7"/>
<dbReference type="FunCoup" id="Q8CGR7">
    <property type="interactions" value="179"/>
</dbReference>
<dbReference type="STRING" id="10090.ENSMUSP00000060437"/>
<dbReference type="iPTMnet" id="Q8CGR7"/>
<dbReference type="PhosphoSitePlus" id="Q8CGR7"/>
<dbReference type="jPOST" id="Q8CGR7"/>
<dbReference type="PaxDb" id="10090-ENSMUSP00000099816"/>
<dbReference type="ProteomicsDB" id="299642"/>
<dbReference type="Pumba" id="Q8CGR7"/>
<dbReference type="Antibodypedia" id="33709">
    <property type="antibodies" value="138 antibodies from 23 providers"/>
</dbReference>
<dbReference type="DNASU" id="76654"/>
<dbReference type="Ensembl" id="ENSMUST00000102755.4">
    <property type="protein sequence ID" value="ENSMUSP00000099816.4"/>
    <property type="gene ID" value="ENSMUSG00000026839.18"/>
</dbReference>
<dbReference type="GeneID" id="76654"/>
<dbReference type="KEGG" id="mmu:76654"/>
<dbReference type="UCSC" id="uc008jsw.2">
    <property type="organism name" value="mouse"/>
</dbReference>
<dbReference type="AGR" id="MGI:1923904"/>
<dbReference type="CTD" id="151531"/>
<dbReference type="MGI" id="MGI:1923904">
    <property type="gene designation" value="Upp2"/>
</dbReference>
<dbReference type="VEuPathDB" id="HostDB:ENSMUSG00000026839"/>
<dbReference type="eggNOG" id="KOG3728">
    <property type="taxonomic scope" value="Eukaryota"/>
</dbReference>
<dbReference type="GeneTree" id="ENSGT00940000161094"/>
<dbReference type="HOGENOM" id="CLU_054104_0_0_1"/>
<dbReference type="InParanoid" id="Q8CGR7"/>
<dbReference type="OMA" id="HAQCHDV"/>
<dbReference type="TreeFam" id="TF314310"/>
<dbReference type="Reactome" id="R-MMU-73614">
    <property type="pathway name" value="Pyrimidine salvage"/>
</dbReference>
<dbReference type="Reactome" id="R-MMU-73621">
    <property type="pathway name" value="Pyrimidine catabolism"/>
</dbReference>
<dbReference type="SABIO-RK" id="Q8CGR7"/>
<dbReference type="UniPathway" id="UPA00574">
    <property type="reaction ID" value="UER00633"/>
</dbReference>
<dbReference type="BioGRID-ORCS" id="76654">
    <property type="hits" value="4 hits in 77 CRISPR screens"/>
</dbReference>
<dbReference type="PRO" id="PR:Q8CGR7"/>
<dbReference type="Proteomes" id="UP000000589">
    <property type="component" value="Chromosome 2"/>
</dbReference>
<dbReference type="RNAct" id="Q8CGR7">
    <property type="molecule type" value="protein"/>
</dbReference>
<dbReference type="Bgee" id="ENSMUSG00000026839">
    <property type="expression patterns" value="Expressed in gall bladder and 82 other cell types or tissues"/>
</dbReference>
<dbReference type="ExpressionAtlas" id="Q8CGR7">
    <property type="expression patterns" value="baseline and differential"/>
</dbReference>
<dbReference type="GO" id="GO:0005829">
    <property type="term" value="C:cytosol"/>
    <property type="evidence" value="ECO:0000314"/>
    <property type="project" value="MGI"/>
</dbReference>
<dbReference type="GO" id="GO:0045098">
    <property type="term" value="C:type III intermediate filament"/>
    <property type="evidence" value="ECO:0000250"/>
    <property type="project" value="UniProtKB"/>
</dbReference>
<dbReference type="GO" id="GO:0047847">
    <property type="term" value="F:deoxyuridine phosphorylase activity"/>
    <property type="evidence" value="ECO:0000266"/>
    <property type="project" value="MGI"/>
</dbReference>
<dbReference type="GO" id="GO:0042802">
    <property type="term" value="F:identical protein binding"/>
    <property type="evidence" value="ECO:0000250"/>
    <property type="project" value="UniProtKB"/>
</dbReference>
<dbReference type="GO" id="GO:0004850">
    <property type="term" value="F:uridine phosphorylase activity"/>
    <property type="evidence" value="ECO:0000314"/>
    <property type="project" value="UniProtKB"/>
</dbReference>
<dbReference type="GO" id="GO:0006248">
    <property type="term" value="P:CMP catabolic process"/>
    <property type="evidence" value="ECO:0000314"/>
    <property type="project" value="MGI"/>
</dbReference>
<dbReference type="GO" id="GO:0006249">
    <property type="term" value="P:dCMP catabolic process"/>
    <property type="evidence" value="ECO:0000266"/>
    <property type="project" value="MGI"/>
</dbReference>
<dbReference type="GO" id="GO:0046050">
    <property type="term" value="P:UMP catabolic process"/>
    <property type="evidence" value="ECO:0000314"/>
    <property type="project" value="MGI"/>
</dbReference>
<dbReference type="GO" id="GO:0044206">
    <property type="term" value="P:UMP salvage"/>
    <property type="evidence" value="ECO:0007669"/>
    <property type="project" value="UniProtKB-UniPathway"/>
</dbReference>
<dbReference type="GO" id="GO:0006218">
    <property type="term" value="P:uridine catabolic process"/>
    <property type="evidence" value="ECO:0000314"/>
    <property type="project" value="UniProtKB"/>
</dbReference>
<dbReference type="CDD" id="cd17763">
    <property type="entry name" value="UP_hUPP-like"/>
    <property type="match status" value="1"/>
</dbReference>
<dbReference type="FunFam" id="3.40.50.1580:FF:000009">
    <property type="entry name" value="Uridine phosphorylase 2"/>
    <property type="match status" value="1"/>
</dbReference>
<dbReference type="Gene3D" id="3.40.50.1580">
    <property type="entry name" value="Nucleoside phosphorylase domain"/>
    <property type="match status" value="1"/>
</dbReference>
<dbReference type="InterPro" id="IPR018016">
    <property type="entry name" value="Nucleoside_phosphorylase_CS"/>
</dbReference>
<dbReference type="InterPro" id="IPR000845">
    <property type="entry name" value="Nucleoside_phosphorylase_d"/>
</dbReference>
<dbReference type="InterPro" id="IPR035994">
    <property type="entry name" value="Nucleoside_phosphorylase_sf"/>
</dbReference>
<dbReference type="InterPro" id="IPR010059">
    <property type="entry name" value="Uridine_phosphorylase_euk"/>
</dbReference>
<dbReference type="NCBIfam" id="TIGR01719">
    <property type="entry name" value="euk_UDPppase"/>
    <property type="match status" value="1"/>
</dbReference>
<dbReference type="PANTHER" id="PTHR43691">
    <property type="entry name" value="URIDINE PHOSPHORYLASE"/>
    <property type="match status" value="1"/>
</dbReference>
<dbReference type="PANTHER" id="PTHR43691:SF8">
    <property type="entry name" value="URIDINE PHOSPHORYLASE 2"/>
    <property type="match status" value="1"/>
</dbReference>
<dbReference type="Pfam" id="PF01048">
    <property type="entry name" value="PNP_UDP_1"/>
    <property type="match status" value="1"/>
</dbReference>
<dbReference type="SUPFAM" id="SSF53167">
    <property type="entry name" value="Purine and uridine phosphorylases"/>
    <property type="match status" value="1"/>
</dbReference>
<dbReference type="PROSITE" id="PS01232">
    <property type="entry name" value="PNP_UDP_1"/>
    <property type="match status" value="1"/>
</dbReference>
<accession>Q8CGR7</accession>
<protein>
    <recommendedName>
        <fullName evidence="6">Uridine phosphorylase 2</fullName>
        <shortName evidence="1">UPase 2</shortName>
        <shortName evidence="1">UrdPase 2</shortName>
        <ecNumber evidence="3">2.4.2.3</ecNumber>
    </recommendedName>
    <alternativeName>
        <fullName evidence="4">Liver-specific uridine phosphorylase</fullName>
        <shortName evidence="4">L-UrdPase</shortName>
    </alternativeName>
</protein>